<reference key="1">
    <citation type="journal article" date="1985" name="Cell">
        <title>Developmentally controlled and tissue-specific expression of unrearranged VH gene segments.</title>
        <authorList>
            <person name="Yancopoulos G.D."/>
            <person name="Alt F.W."/>
        </authorList>
    </citation>
    <scope>NUCLEOTIDE SEQUENCE [MRNA]</scope>
</reference>
<reference key="2">
    <citation type="journal article" date="2009" name="PLoS Biol.">
        <title>Lineage-specific biology revealed by a finished genome assembly of the mouse.</title>
        <authorList>
            <person name="Church D.M."/>
            <person name="Goodstadt L."/>
            <person name="Hillier L.W."/>
            <person name="Zody M.C."/>
            <person name="Goldstein S."/>
            <person name="She X."/>
            <person name="Bult C.J."/>
            <person name="Agarwala R."/>
            <person name="Cherry J.L."/>
            <person name="DiCuccio M."/>
            <person name="Hlavina W."/>
            <person name="Kapustin Y."/>
            <person name="Meric P."/>
            <person name="Maglott D."/>
            <person name="Birtle Z."/>
            <person name="Marques A.C."/>
            <person name="Graves T."/>
            <person name="Zhou S."/>
            <person name="Teague B."/>
            <person name="Potamousis K."/>
            <person name="Churas C."/>
            <person name="Place M."/>
            <person name="Herschleb J."/>
            <person name="Runnheim R."/>
            <person name="Forrest D."/>
            <person name="Amos-Landgraf J."/>
            <person name="Schwartz D.C."/>
            <person name="Cheng Z."/>
            <person name="Lindblad-Toh K."/>
            <person name="Eichler E.E."/>
            <person name="Ponting C.P."/>
        </authorList>
    </citation>
    <scope>NUCLEOTIDE SEQUENCE [LARGE SCALE GENOMIC DNA]</scope>
    <source>
        <strain>C57BL/6J</strain>
    </source>
</reference>
<feature type="signal peptide">
    <location>
        <begin position="1"/>
        <end position="19"/>
    </location>
</feature>
<feature type="chain" id="PRO_0000015234" description="Ig heavy chain V region 1-72">
    <location>
        <begin position="20"/>
        <end position="117"/>
    </location>
</feature>
<feature type="region of interest" description="Framework-1">
    <location>
        <begin position="20"/>
        <end position="49"/>
    </location>
</feature>
<feature type="region of interest" description="Complementarity-determining-1">
    <location>
        <begin position="50"/>
        <end position="54"/>
    </location>
</feature>
<feature type="region of interest" description="Framework-2">
    <location>
        <begin position="55"/>
        <end position="68"/>
    </location>
</feature>
<feature type="region of interest" description="Complementarity-determining-2">
    <location>
        <begin position="69"/>
        <end position="85"/>
    </location>
</feature>
<feature type="region of interest" description="Framework-3">
    <location>
        <begin position="86"/>
        <end position="117"/>
    </location>
</feature>
<feature type="disulfide bond" evidence="1">
    <location>
        <begin position="41"/>
        <end position="115"/>
    </location>
</feature>
<feature type="sequence conflict" description="In Ref. 1; AAA38506." ref="1">
    <original>Q</original>
    <variation>P</variation>
    <location>
        <position position="20"/>
    </location>
</feature>
<feature type="sequence conflict" description="In Ref. 1; AAA38506." ref="1">
    <original>R</original>
    <variation>N</variation>
    <location>
        <position position="69"/>
    </location>
</feature>
<feature type="sequence conflict" description="In Ref. 1; AAA38506." ref="1">
    <original>A</original>
    <variation>T</variation>
    <location>
        <position position="116"/>
    </location>
</feature>
<feature type="non-terminal residue">
    <location>
        <position position="117"/>
    </location>
</feature>
<feature type="strand" evidence="4">
    <location>
        <begin position="22"/>
        <end position="25"/>
    </location>
</feature>
<feature type="strand" evidence="4">
    <location>
        <begin position="29"/>
        <end position="31"/>
    </location>
</feature>
<feature type="strand" evidence="4">
    <location>
        <begin position="37"/>
        <end position="39"/>
    </location>
</feature>
<feature type="strand" evidence="4">
    <location>
        <begin position="41"/>
        <end position="46"/>
    </location>
</feature>
<feature type="turn" evidence="4">
    <location>
        <begin position="48"/>
        <end position="50"/>
    </location>
</feature>
<feature type="strand" evidence="4">
    <location>
        <begin position="53"/>
        <end position="57"/>
    </location>
</feature>
<feature type="strand" evidence="4">
    <location>
        <begin position="65"/>
        <end position="70"/>
    </location>
</feature>
<feature type="turn" evidence="4">
    <location>
        <begin position="72"/>
        <end position="74"/>
    </location>
</feature>
<feature type="strand" evidence="4">
    <location>
        <begin position="77"/>
        <end position="79"/>
    </location>
</feature>
<feature type="turn" evidence="4">
    <location>
        <begin position="81"/>
        <end position="86"/>
    </location>
</feature>
<feature type="strand" evidence="4">
    <location>
        <begin position="87"/>
        <end position="92"/>
    </location>
</feature>
<feature type="turn" evidence="4">
    <location>
        <begin position="93"/>
        <end position="96"/>
    </location>
</feature>
<feature type="strand" evidence="4">
    <location>
        <begin position="97"/>
        <end position="102"/>
    </location>
</feature>
<feature type="helix" evidence="4">
    <location>
        <begin position="107"/>
        <end position="109"/>
    </location>
</feature>
<feature type="strand" evidence="4">
    <location>
        <begin position="111"/>
        <end position="117"/>
    </location>
</feature>
<protein>
    <recommendedName>
        <fullName evidence="3">Ig heavy chain V region 1-72</fullName>
    </recommendedName>
    <alternativeName>
        <fullName evidence="2">Ig heavy chain V region VH558 B4</fullName>
    </alternativeName>
</protein>
<evidence type="ECO:0000255" key="1">
    <source>
        <dbReference type="PROSITE-ProRule" id="PRU00114"/>
    </source>
</evidence>
<evidence type="ECO:0000303" key="2">
    <source>
    </source>
</evidence>
<evidence type="ECO:0000312" key="3">
    <source>
        <dbReference type="MGI" id="MGI:4439633"/>
    </source>
</evidence>
<evidence type="ECO:0007829" key="4">
    <source>
        <dbReference type="PDB" id="1NGW"/>
    </source>
</evidence>
<accession>P06328</accession>
<accession>A0A075B5X9</accession>
<proteinExistence type="evidence at protein level"/>
<keyword id="KW-0002">3D-structure</keyword>
<keyword id="KW-1064">Adaptive immunity</keyword>
<keyword id="KW-1015">Disulfide bond</keyword>
<keyword id="KW-0391">Immunity</keyword>
<keyword id="KW-1280">Immunoglobulin</keyword>
<keyword id="KW-1185">Reference proteome</keyword>
<keyword id="KW-0732">Signal</keyword>
<name>HVM49_MOUSE</name>
<gene>
    <name evidence="3" type="primary">Ighv1-72</name>
</gene>
<sequence>MGWSCIMLFLAATATGVHSQVQLQQPGAELVKPGASVKLSCKASGYTFTSYWMHWVKQRPGRGLEWIGRIDPNSGGTKYNEKFKSKATLTVDKPSSTAYMQLSSLTSEDSAVYYCAR</sequence>
<organism>
    <name type="scientific">Mus musculus</name>
    <name type="common">Mouse</name>
    <dbReference type="NCBI Taxonomy" id="10090"/>
    <lineage>
        <taxon>Eukaryota</taxon>
        <taxon>Metazoa</taxon>
        <taxon>Chordata</taxon>
        <taxon>Craniata</taxon>
        <taxon>Vertebrata</taxon>
        <taxon>Euteleostomi</taxon>
        <taxon>Mammalia</taxon>
        <taxon>Eutheria</taxon>
        <taxon>Euarchontoglires</taxon>
        <taxon>Glires</taxon>
        <taxon>Rodentia</taxon>
        <taxon>Myomorpha</taxon>
        <taxon>Muroidea</taxon>
        <taxon>Muridae</taxon>
        <taxon>Murinae</taxon>
        <taxon>Mus</taxon>
        <taxon>Mus</taxon>
    </lineage>
</organism>
<dbReference type="EMBL" id="M13788">
    <property type="protein sequence ID" value="AAA38506.1"/>
    <property type="molecule type" value="mRNA"/>
</dbReference>
<dbReference type="EMBL" id="AC163348">
    <property type="status" value="NOT_ANNOTATED_CDS"/>
    <property type="molecule type" value="Genomic_DNA"/>
</dbReference>
<dbReference type="PIR" id="A02035">
    <property type="entry name" value="MHMSB4"/>
</dbReference>
<dbReference type="PDB" id="1NGW">
    <property type="method" value="X-ray"/>
    <property type="resolution" value="2.60 A"/>
    <property type="chains" value="B/H=27-117"/>
</dbReference>
<dbReference type="PDB" id="8EMA">
    <property type="method" value="EM"/>
    <property type="resolution" value="8.20 A"/>
    <property type="chains" value="A/B=1-117"/>
</dbReference>
<dbReference type="PDBsum" id="1NGW"/>
<dbReference type="PDBsum" id="8EMA"/>
<dbReference type="EMDB" id="EMD-37306"/>
<dbReference type="EMDB" id="EMD-38171"/>
<dbReference type="EMDB" id="EMD-9633"/>
<dbReference type="EMDB" id="EMD-9634"/>
<dbReference type="SMR" id="P06328"/>
<dbReference type="FunCoup" id="P06328">
    <property type="interactions" value="569"/>
</dbReference>
<dbReference type="jPOST" id="P06328"/>
<dbReference type="PeptideAtlas" id="P06328"/>
<dbReference type="Ensembl" id="ENSMUST00000103541.3">
    <property type="protein sequence ID" value="ENSMUSP00000100322.2"/>
    <property type="gene ID" value="ENSMUSG00000096074.3"/>
</dbReference>
<dbReference type="AGR" id="MGI:4439633"/>
<dbReference type="MGI" id="MGI:4439633">
    <property type="gene designation" value="Ighv1-72"/>
</dbReference>
<dbReference type="VEuPathDB" id="HostDB:ENSMUSG00000096074"/>
<dbReference type="GeneTree" id="ENSGT00950000183013"/>
<dbReference type="HOGENOM" id="CLU_077975_5_2_1"/>
<dbReference type="InParanoid" id="P06328"/>
<dbReference type="OMA" id="EWMGIIN"/>
<dbReference type="OrthoDB" id="9945861at2759"/>
<dbReference type="EvolutionaryTrace" id="P06328"/>
<dbReference type="PRO" id="PR:P06328"/>
<dbReference type="Proteomes" id="UP000000589">
    <property type="component" value="Chromosome 12"/>
</dbReference>
<dbReference type="RNAct" id="P06328">
    <property type="molecule type" value="protein"/>
</dbReference>
<dbReference type="Bgee" id="ENSMUSG00000096074">
    <property type="expression patterns" value="Expressed in jejunum and 21 other cell types or tissues"/>
</dbReference>
<dbReference type="GO" id="GO:0005576">
    <property type="term" value="C:extracellular region"/>
    <property type="evidence" value="ECO:0000304"/>
    <property type="project" value="Reactome"/>
</dbReference>
<dbReference type="GO" id="GO:0019814">
    <property type="term" value="C:immunoglobulin complex"/>
    <property type="evidence" value="ECO:0007669"/>
    <property type="project" value="UniProtKB-KW"/>
</dbReference>
<dbReference type="GO" id="GO:0002250">
    <property type="term" value="P:adaptive immune response"/>
    <property type="evidence" value="ECO:0007669"/>
    <property type="project" value="UniProtKB-KW"/>
</dbReference>
<dbReference type="CDD" id="cd04981">
    <property type="entry name" value="IgV_H"/>
    <property type="match status" value="1"/>
</dbReference>
<dbReference type="FunFam" id="2.60.40.10:FF:001025">
    <property type="entry name" value="Immunoglobulin heavy variable V1-74"/>
    <property type="match status" value="1"/>
</dbReference>
<dbReference type="Gene3D" id="2.60.40.10">
    <property type="entry name" value="Immunoglobulins"/>
    <property type="match status" value="1"/>
</dbReference>
<dbReference type="InterPro" id="IPR007110">
    <property type="entry name" value="Ig-like_dom"/>
</dbReference>
<dbReference type="InterPro" id="IPR036179">
    <property type="entry name" value="Ig-like_dom_sf"/>
</dbReference>
<dbReference type="InterPro" id="IPR013783">
    <property type="entry name" value="Ig-like_fold"/>
</dbReference>
<dbReference type="InterPro" id="IPR013106">
    <property type="entry name" value="Ig_V-set"/>
</dbReference>
<dbReference type="InterPro" id="IPR050199">
    <property type="entry name" value="IgHV"/>
</dbReference>
<dbReference type="PANTHER" id="PTHR23266">
    <property type="entry name" value="IMMUNOGLOBULIN HEAVY CHAIN"/>
    <property type="match status" value="1"/>
</dbReference>
<dbReference type="Pfam" id="PF07686">
    <property type="entry name" value="V-set"/>
    <property type="match status" value="1"/>
</dbReference>
<dbReference type="SMART" id="SM00406">
    <property type="entry name" value="IGv"/>
    <property type="match status" value="1"/>
</dbReference>
<dbReference type="SUPFAM" id="SSF48726">
    <property type="entry name" value="Immunoglobulin"/>
    <property type="match status" value="1"/>
</dbReference>
<dbReference type="PROSITE" id="PS50835">
    <property type="entry name" value="IG_LIKE"/>
    <property type="match status" value="1"/>
</dbReference>